<organism>
    <name type="scientific">Bacillus cytotoxicus (strain DSM 22905 / CIP 110041 / 391-98 / NVH 391-98)</name>
    <dbReference type="NCBI Taxonomy" id="315749"/>
    <lineage>
        <taxon>Bacteria</taxon>
        <taxon>Bacillati</taxon>
        <taxon>Bacillota</taxon>
        <taxon>Bacilli</taxon>
        <taxon>Bacillales</taxon>
        <taxon>Bacillaceae</taxon>
        <taxon>Bacillus</taxon>
        <taxon>Bacillus cereus group</taxon>
    </lineage>
</organism>
<reference key="1">
    <citation type="journal article" date="2008" name="Chem. Biol. Interact.">
        <title>Extending the Bacillus cereus group genomics to putative food-borne pathogens of different toxicity.</title>
        <authorList>
            <person name="Lapidus A."/>
            <person name="Goltsman E."/>
            <person name="Auger S."/>
            <person name="Galleron N."/>
            <person name="Segurens B."/>
            <person name="Dossat C."/>
            <person name="Land M.L."/>
            <person name="Broussolle V."/>
            <person name="Brillard J."/>
            <person name="Guinebretiere M.-H."/>
            <person name="Sanchis V."/>
            <person name="Nguen-the C."/>
            <person name="Lereclus D."/>
            <person name="Richardson P."/>
            <person name="Wincker P."/>
            <person name="Weissenbach J."/>
            <person name="Ehrlich S.D."/>
            <person name="Sorokin A."/>
        </authorList>
    </citation>
    <scope>NUCLEOTIDE SEQUENCE [LARGE SCALE GENOMIC DNA]</scope>
    <source>
        <strain>DSM 22905 / CIP 110041 / 391-98 / NVH 391-98</strain>
    </source>
</reference>
<dbReference type="EC" id="2.3.1.89" evidence="1"/>
<dbReference type="EMBL" id="CP000764">
    <property type="protein sequence ID" value="ABS22917.1"/>
    <property type="molecule type" value="Genomic_DNA"/>
</dbReference>
<dbReference type="SMR" id="A7GS09"/>
<dbReference type="STRING" id="315749.Bcer98_2683"/>
<dbReference type="GeneID" id="33897938"/>
<dbReference type="KEGG" id="bcy:Bcer98_2683"/>
<dbReference type="eggNOG" id="COG2171">
    <property type="taxonomic scope" value="Bacteria"/>
</dbReference>
<dbReference type="HOGENOM" id="CLU_103751_0_0_9"/>
<dbReference type="OrthoDB" id="9788080at2"/>
<dbReference type="UniPathway" id="UPA00034">
    <property type="reaction ID" value="UER00022"/>
</dbReference>
<dbReference type="Proteomes" id="UP000002300">
    <property type="component" value="Chromosome"/>
</dbReference>
<dbReference type="GO" id="GO:0047200">
    <property type="term" value="F:tetrahydrodipicolinate N-acetyltransferase activity"/>
    <property type="evidence" value="ECO:0007669"/>
    <property type="project" value="UniProtKB-EC"/>
</dbReference>
<dbReference type="GO" id="GO:0019877">
    <property type="term" value="P:diaminopimelate biosynthetic process"/>
    <property type="evidence" value="ECO:0007669"/>
    <property type="project" value="UniProtKB-UniRule"/>
</dbReference>
<dbReference type="GO" id="GO:0009089">
    <property type="term" value="P:lysine biosynthetic process via diaminopimelate"/>
    <property type="evidence" value="ECO:0007669"/>
    <property type="project" value="UniProtKB-UniRule"/>
</dbReference>
<dbReference type="CDD" id="cd03350">
    <property type="entry name" value="LbH_THP_succinylT"/>
    <property type="match status" value="1"/>
</dbReference>
<dbReference type="Gene3D" id="2.160.10.10">
    <property type="entry name" value="Hexapeptide repeat proteins"/>
    <property type="match status" value="1"/>
</dbReference>
<dbReference type="Gene3D" id="3.30.70.250">
    <property type="entry name" value="Malonyl-CoA ACP transacylase, ACP-binding"/>
    <property type="match status" value="1"/>
</dbReference>
<dbReference type="HAMAP" id="MF_01691">
    <property type="entry name" value="DapH"/>
    <property type="match status" value="1"/>
</dbReference>
<dbReference type="InterPro" id="IPR019873">
    <property type="entry name" value="DapH"/>
</dbReference>
<dbReference type="InterPro" id="IPR013710">
    <property type="entry name" value="DapH_N"/>
</dbReference>
<dbReference type="InterPro" id="IPR001451">
    <property type="entry name" value="Hexapep"/>
</dbReference>
<dbReference type="InterPro" id="IPR018357">
    <property type="entry name" value="Hexapep_transf_CS"/>
</dbReference>
<dbReference type="InterPro" id="IPR050179">
    <property type="entry name" value="Trans_hexapeptide_repeat"/>
</dbReference>
<dbReference type="InterPro" id="IPR011004">
    <property type="entry name" value="Trimer_LpxA-like_sf"/>
</dbReference>
<dbReference type="NCBIfam" id="TIGR03532">
    <property type="entry name" value="DapD_Ac"/>
    <property type="match status" value="1"/>
</dbReference>
<dbReference type="PANTHER" id="PTHR43300:SF10">
    <property type="entry name" value="2,3,4,5-TETRAHYDROPYRIDINE-2,6-DICARBOXYLATE N-ACETYLTRANSFERASE"/>
    <property type="match status" value="1"/>
</dbReference>
<dbReference type="PANTHER" id="PTHR43300">
    <property type="entry name" value="ACETYLTRANSFERASE"/>
    <property type="match status" value="1"/>
</dbReference>
<dbReference type="Pfam" id="PF08503">
    <property type="entry name" value="DapH_N"/>
    <property type="match status" value="1"/>
</dbReference>
<dbReference type="Pfam" id="PF00132">
    <property type="entry name" value="Hexapep"/>
    <property type="match status" value="1"/>
</dbReference>
<dbReference type="Pfam" id="PF14602">
    <property type="entry name" value="Hexapep_2"/>
    <property type="match status" value="1"/>
</dbReference>
<dbReference type="SUPFAM" id="SSF51161">
    <property type="entry name" value="Trimeric LpxA-like enzymes"/>
    <property type="match status" value="1"/>
</dbReference>
<dbReference type="PROSITE" id="PS00101">
    <property type="entry name" value="HEXAPEP_TRANSFERASES"/>
    <property type="match status" value="1"/>
</dbReference>
<accession>A7GS09</accession>
<comment type="function">
    <text evidence="1">Catalyzes the transfer of an acetyl group from acetyl-CoA to tetrahydrodipicolinate.</text>
</comment>
<comment type="catalytic activity">
    <reaction evidence="1">
        <text>(S)-2,3,4,5-tetrahydrodipicolinate + acetyl-CoA + H2O = L-2-acetamido-6-oxoheptanedioate + CoA</text>
        <dbReference type="Rhea" id="RHEA:13085"/>
        <dbReference type="ChEBI" id="CHEBI:15377"/>
        <dbReference type="ChEBI" id="CHEBI:16845"/>
        <dbReference type="ChEBI" id="CHEBI:57287"/>
        <dbReference type="ChEBI" id="CHEBI:57288"/>
        <dbReference type="ChEBI" id="CHEBI:58117"/>
        <dbReference type="EC" id="2.3.1.89"/>
    </reaction>
</comment>
<comment type="pathway">
    <text evidence="1">Amino-acid biosynthesis; L-lysine biosynthesis via DAP pathway; LL-2,6-diaminopimelate from (S)-tetrahydrodipicolinate (acetylase route): step 1/3.</text>
</comment>
<comment type="similarity">
    <text evidence="1">Belongs to the transferase hexapeptide repeat family. DapH subfamily.</text>
</comment>
<keyword id="KW-0012">Acyltransferase</keyword>
<keyword id="KW-0028">Amino-acid biosynthesis</keyword>
<keyword id="KW-0220">Diaminopimelate biosynthesis</keyword>
<keyword id="KW-0457">Lysine biosynthesis</keyword>
<keyword id="KW-0677">Repeat</keyword>
<keyword id="KW-0808">Transferase</keyword>
<feature type="chain" id="PRO_0000376634" description="2,3,4,5-tetrahydropyridine-2,6-dicarboxylate N-acetyltransferase">
    <location>
        <begin position="1"/>
        <end position="240"/>
    </location>
</feature>
<gene>
    <name evidence="1" type="primary">dapH</name>
    <name type="ordered locus">Bcer98_2683</name>
</gene>
<proteinExistence type="inferred from homology"/>
<evidence type="ECO:0000255" key="1">
    <source>
        <dbReference type="HAMAP-Rule" id="MF_01691"/>
    </source>
</evidence>
<name>DAPH_BACCN</name>
<sequence length="240" mass="25628">MKMMDANEIISFIQKSEKKTPVKVYIKGDLKEVTFPGTVQAFVNKKAGVLFGEWSEIKVILEENKKHIADYVVENDRRNSAIPMLDLKGIKARIEPGAIIRDHVEIGDNAVIMMNATINIGAVIGEGSMIDMNAVLGGRATVGKNCHVGAGAVLAGVIEPPSAKPVIVEDDVVIGANVVVLEGVTVGKGAVVAAGAIVTEDVPPYTVVAGTPARVIKKIDEKTKAKTEIKQELRQLNPEK</sequence>
<protein>
    <recommendedName>
        <fullName evidence="1">2,3,4,5-tetrahydropyridine-2,6-dicarboxylate N-acetyltransferase</fullName>
        <ecNumber evidence="1">2.3.1.89</ecNumber>
    </recommendedName>
    <alternativeName>
        <fullName evidence="1">Tetrahydrodipicolinate N-acetyltransferase</fullName>
        <shortName evidence="1">THP acetyltransferase</shortName>
        <shortName evidence="1">Tetrahydropicolinate acetylase</shortName>
    </alternativeName>
</protein>